<organism>
    <name type="scientific">Escherichia coli O127:H6 (strain E2348/69 / EPEC)</name>
    <dbReference type="NCBI Taxonomy" id="574521"/>
    <lineage>
        <taxon>Bacteria</taxon>
        <taxon>Pseudomonadati</taxon>
        <taxon>Pseudomonadota</taxon>
        <taxon>Gammaproteobacteria</taxon>
        <taxon>Enterobacterales</taxon>
        <taxon>Enterobacteriaceae</taxon>
        <taxon>Escherichia</taxon>
    </lineage>
</organism>
<gene>
    <name evidence="1" type="primary">pdxH</name>
    <name type="ordered locus">E2348C_1725</name>
</gene>
<protein>
    <recommendedName>
        <fullName evidence="1">Pyridoxine/pyridoxamine 5'-phosphate oxidase</fullName>
        <ecNumber evidence="1">1.4.3.5</ecNumber>
    </recommendedName>
    <alternativeName>
        <fullName evidence="1">PNP/PMP oxidase</fullName>
        <shortName evidence="1">PNPOx</shortName>
    </alternativeName>
    <alternativeName>
        <fullName evidence="1">Pyridoxal 5'-phosphate synthase</fullName>
    </alternativeName>
</protein>
<evidence type="ECO:0000255" key="1">
    <source>
        <dbReference type="HAMAP-Rule" id="MF_01629"/>
    </source>
</evidence>
<name>PDXH_ECO27</name>
<feature type="chain" id="PRO_1000186304" description="Pyridoxine/pyridoxamine 5'-phosphate oxidase">
    <location>
        <begin position="1"/>
        <end position="218"/>
    </location>
</feature>
<feature type="binding site" evidence="1">
    <location>
        <begin position="14"/>
        <end position="17"/>
    </location>
    <ligand>
        <name>substrate</name>
    </ligand>
</feature>
<feature type="binding site" evidence="1">
    <location>
        <begin position="67"/>
        <end position="72"/>
    </location>
    <ligand>
        <name>FMN</name>
        <dbReference type="ChEBI" id="CHEBI:58210"/>
    </ligand>
</feature>
<feature type="binding site" evidence="1">
    <location>
        <position position="72"/>
    </location>
    <ligand>
        <name>substrate</name>
    </ligand>
</feature>
<feature type="binding site" evidence="1">
    <location>
        <begin position="82"/>
        <end position="83"/>
    </location>
    <ligand>
        <name>FMN</name>
        <dbReference type="ChEBI" id="CHEBI:58210"/>
    </ligand>
</feature>
<feature type="binding site" evidence="1">
    <location>
        <position position="88"/>
    </location>
    <ligand>
        <name>FMN</name>
        <dbReference type="ChEBI" id="CHEBI:58210"/>
    </ligand>
</feature>
<feature type="binding site" evidence="1">
    <location>
        <position position="89"/>
    </location>
    <ligand>
        <name>FMN</name>
        <dbReference type="ChEBI" id="CHEBI:58210"/>
    </ligand>
</feature>
<feature type="binding site" evidence="1">
    <location>
        <position position="111"/>
    </location>
    <ligand>
        <name>FMN</name>
        <dbReference type="ChEBI" id="CHEBI:58210"/>
    </ligand>
</feature>
<feature type="binding site" evidence="1">
    <location>
        <position position="129"/>
    </location>
    <ligand>
        <name>substrate</name>
    </ligand>
</feature>
<feature type="binding site" evidence="1">
    <location>
        <position position="133"/>
    </location>
    <ligand>
        <name>substrate</name>
    </ligand>
</feature>
<feature type="binding site" evidence="1">
    <location>
        <position position="137"/>
    </location>
    <ligand>
        <name>substrate</name>
    </ligand>
</feature>
<feature type="binding site" evidence="1">
    <location>
        <begin position="146"/>
        <end position="147"/>
    </location>
    <ligand>
        <name>FMN</name>
        <dbReference type="ChEBI" id="CHEBI:58210"/>
    </ligand>
</feature>
<feature type="binding site" evidence="1">
    <location>
        <position position="191"/>
    </location>
    <ligand>
        <name>FMN</name>
        <dbReference type="ChEBI" id="CHEBI:58210"/>
    </ligand>
</feature>
<feature type="binding site" evidence="1">
    <location>
        <begin position="197"/>
        <end position="199"/>
    </location>
    <ligand>
        <name>substrate</name>
    </ligand>
</feature>
<feature type="binding site" evidence="1">
    <location>
        <position position="201"/>
    </location>
    <ligand>
        <name>FMN</name>
        <dbReference type="ChEBI" id="CHEBI:58210"/>
    </ligand>
</feature>
<dbReference type="EC" id="1.4.3.5" evidence="1"/>
<dbReference type="EMBL" id="FM180568">
    <property type="protein sequence ID" value="CAS09273.1"/>
    <property type="molecule type" value="Genomic_DNA"/>
</dbReference>
<dbReference type="RefSeq" id="WP_001282319.1">
    <property type="nucleotide sequence ID" value="NC_011601.1"/>
</dbReference>
<dbReference type="SMR" id="B7URX9"/>
<dbReference type="GeneID" id="75171699"/>
<dbReference type="KEGG" id="ecg:E2348C_1725"/>
<dbReference type="HOGENOM" id="CLU_032263_2_2_6"/>
<dbReference type="UniPathway" id="UPA01068">
    <property type="reaction ID" value="UER00304"/>
</dbReference>
<dbReference type="UniPathway" id="UPA01068">
    <property type="reaction ID" value="UER00305"/>
</dbReference>
<dbReference type="Proteomes" id="UP000008205">
    <property type="component" value="Chromosome"/>
</dbReference>
<dbReference type="GO" id="GO:0010181">
    <property type="term" value="F:FMN binding"/>
    <property type="evidence" value="ECO:0007669"/>
    <property type="project" value="UniProtKB-UniRule"/>
</dbReference>
<dbReference type="GO" id="GO:0004733">
    <property type="term" value="F:pyridoxamine phosphate oxidase activity"/>
    <property type="evidence" value="ECO:0007669"/>
    <property type="project" value="UniProtKB-UniRule"/>
</dbReference>
<dbReference type="GO" id="GO:0008615">
    <property type="term" value="P:pyridoxine biosynthetic process"/>
    <property type="evidence" value="ECO:0007669"/>
    <property type="project" value="UniProtKB-KW"/>
</dbReference>
<dbReference type="FunFam" id="2.30.110.10:FF:000001">
    <property type="entry name" value="Pyridoxine/pyridoxamine 5'-phosphate oxidase"/>
    <property type="match status" value="1"/>
</dbReference>
<dbReference type="Gene3D" id="2.30.110.10">
    <property type="entry name" value="Electron Transport, Fmn-binding Protein, Chain A"/>
    <property type="match status" value="1"/>
</dbReference>
<dbReference type="HAMAP" id="MF_01629">
    <property type="entry name" value="PdxH"/>
    <property type="match status" value="1"/>
</dbReference>
<dbReference type="InterPro" id="IPR000659">
    <property type="entry name" value="Pyridox_Oxase"/>
</dbReference>
<dbReference type="InterPro" id="IPR019740">
    <property type="entry name" value="Pyridox_Oxase_CS"/>
</dbReference>
<dbReference type="InterPro" id="IPR011576">
    <property type="entry name" value="Pyridox_Oxase_N"/>
</dbReference>
<dbReference type="InterPro" id="IPR019576">
    <property type="entry name" value="Pyridoxamine_oxidase_dimer_C"/>
</dbReference>
<dbReference type="InterPro" id="IPR012349">
    <property type="entry name" value="Split_barrel_FMN-bd"/>
</dbReference>
<dbReference type="NCBIfam" id="TIGR00558">
    <property type="entry name" value="pdxH"/>
    <property type="match status" value="1"/>
</dbReference>
<dbReference type="NCBIfam" id="NF004231">
    <property type="entry name" value="PRK05679.1"/>
    <property type="match status" value="1"/>
</dbReference>
<dbReference type="PANTHER" id="PTHR10851:SF0">
    <property type="entry name" value="PYRIDOXINE-5'-PHOSPHATE OXIDASE"/>
    <property type="match status" value="1"/>
</dbReference>
<dbReference type="PANTHER" id="PTHR10851">
    <property type="entry name" value="PYRIDOXINE-5-PHOSPHATE OXIDASE"/>
    <property type="match status" value="1"/>
</dbReference>
<dbReference type="Pfam" id="PF10590">
    <property type="entry name" value="PNP_phzG_C"/>
    <property type="match status" value="1"/>
</dbReference>
<dbReference type="Pfam" id="PF01243">
    <property type="entry name" value="PNPOx_N"/>
    <property type="match status" value="1"/>
</dbReference>
<dbReference type="PIRSF" id="PIRSF000190">
    <property type="entry name" value="Pyd_amn-ph_oxd"/>
    <property type="match status" value="1"/>
</dbReference>
<dbReference type="SUPFAM" id="SSF50475">
    <property type="entry name" value="FMN-binding split barrel"/>
    <property type="match status" value="1"/>
</dbReference>
<dbReference type="PROSITE" id="PS01064">
    <property type="entry name" value="PYRIDOX_OXIDASE"/>
    <property type="match status" value="1"/>
</dbReference>
<proteinExistence type="inferred from homology"/>
<keyword id="KW-0285">Flavoprotein</keyword>
<keyword id="KW-0288">FMN</keyword>
<keyword id="KW-0560">Oxidoreductase</keyword>
<keyword id="KW-0664">Pyridoxine biosynthesis</keyword>
<keyword id="KW-1185">Reference proteome</keyword>
<reference key="1">
    <citation type="journal article" date="2009" name="J. Bacteriol.">
        <title>Complete genome sequence and comparative genome analysis of enteropathogenic Escherichia coli O127:H6 strain E2348/69.</title>
        <authorList>
            <person name="Iguchi A."/>
            <person name="Thomson N.R."/>
            <person name="Ogura Y."/>
            <person name="Saunders D."/>
            <person name="Ooka T."/>
            <person name="Henderson I.R."/>
            <person name="Harris D."/>
            <person name="Asadulghani M."/>
            <person name="Kurokawa K."/>
            <person name="Dean P."/>
            <person name="Kenny B."/>
            <person name="Quail M.A."/>
            <person name="Thurston S."/>
            <person name="Dougan G."/>
            <person name="Hayashi T."/>
            <person name="Parkhill J."/>
            <person name="Frankel G."/>
        </authorList>
    </citation>
    <scope>NUCLEOTIDE SEQUENCE [LARGE SCALE GENOMIC DNA]</scope>
    <source>
        <strain>E2348/69 / EPEC</strain>
    </source>
</reference>
<sequence>MSDNDELQQIAHLRREYTKGGLRRRDLPADPLTLFERWLSQACEAKLADPTAMVVATVDEHGQPYQRIVLLKHYDEKGMVFYTNLGSRKAHQIENNPRVSLLFPWHTLERQVMVIGKAERLSTLEVMKYFHSRPRDSQIGAWVSKQSSRISARGILESKFLELKQKFQQGEVPLPSFWGGFRVSLEQIEFWQGGEHRLHDRFLYQRENDAWKIDRLAP</sequence>
<accession>B7URX9</accession>
<comment type="function">
    <text evidence="1">Catalyzes the oxidation of either pyridoxine 5'-phosphate (PNP) or pyridoxamine 5'-phosphate (PMP) into pyridoxal 5'-phosphate (PLP).</text>
</comment>
<comment type="catalytic activity">
    <reaction evidence="1">
        <text>pyridoxamine 5'-phosphate + O2 + H2O = pyridoxal 5'-phosphate + H2O2 + NH4(+)</text>
        <dbReference type="Rhea" id="RHEA:15817"/>
        <dbReference type="ChEBI" id="CHEBI:15377"/>
        <dbReference type="ChEBI" id="CHEBI:15379"/>
        <dbReference type="ChEBI" id="CHEBI:16240"/>
        <dbReference type="ChEBI" id="CHEBI:28938"/>
        <dbReference type="ChEBI" id="CHEBI:58451"/>
        <dbReference type="ChEBI" id="CHEBI:597326"/>
        <dbReference type="EC" id="1.4.3.5"/>
    </reaction>
</comment>
<comment type="catalytic activity">
    <reaction evidence="1">
        <text>pyridoxine 5'-phosphate + O2 = pyridoxal 5'-phosphate + H2O2</text>
        <dbReference type="Rhea" id="RHEA:15149"/>
        <dbReference type="ChEBI" id="CHEBI:15379"/>
        <dbReference type="ChEBI" id="CHEBI:16240"/>
        <dbReference type="ChEBI" id="CHEBI:58589"/>
        <dbReference type="ChEBI" id="CHEBI:597326"/>
        <dbReference type="EC" id="1.4.3.5"/>
    </reaction>
</comment>
<comment type="cofactor">
    <cofactor evidence="1">
        <name>FMN</name>
        <dbReference type="ChEBI" id="CHEBI:58210"/>
    </cofactor>
    <text evidence="1">Binds 1 FMN per subunit.</text>
</comment>
<comment type="pathway">
    <text evidence="1">Cofactor metabolism; pyridoxal 5'-phosphate salvage; pyridoxal 5'-phosphate from pyridoxamine 5'-phosphate: step 1/1.</text>
</comment>
<comment type="pathway">
    <text evidence="1">Cofactor metabolism; pyridoxal 5'-phosphate salvage; pyridoxal 5'-phosphate from pyridoxine 5'-phosphate: step 1/1.</text>
</comment>
<comment type="subunit">
    <text evidence="1">Homodimer.</text>
</comment>
<comment type="similarity">
    <text evidence="1">Belongs to the pyridoxamine 5'-phosphate oxidase family.</text>
</comment>